<dbReference type="EC" id="5.1.3.29" evidence="1"/>
<dbReference type="EMBL" id="CU928161">
    <property type="protein sequence ID" value="CAR04314.1"/>
    <property type="molecule type" value="Genomic_DNA"/>
</dbReference>
<dbReference type="RefSeq" id="WP_000920840.1">
    <property type="nucleotide sequence ID" value="NC_011742.1"/>
</dbReference>
<dbReference type="SMR" id="B7MLC5"/>
<dbReference type="GeneID" id="93779194"/>
<dbReference type="KEGG" id="ecz:ECS88_3073"/>
<dbReference type="HOGENOM" id="CLU_120075_1_0_6"/>
<dbReference type="UniPathway" id="UPA00956"/>
<dbReference type="Proteomes" id="UP000000747">
    <property type="component" value="Chromosome"/>
</dbReference>
<dbReference type="GO" id="GO:0005737">
    <property type="term" value="C:cytoplasm"/>
    <property type="evidence" value="ECO:0007669"/>
    <property type="project" value="UniProtKB-SubCell"/>
</dbReference>
<dbReference type="GO" id="GO:0042806">
    <property type="term" value="F:fucose binding"/>
    <property type="evidence" value="ECO:0007669"/>
    <property type="project" value="InterPro"/>
</dbReference>
<dbReference type="GO" id="GO:0036373">
    <property type="term" value="F:L-fucose mutarotase activity"/>
    <property type="evidence" value="ECO:0007669"/>
    <property type="project" value="UniProtKB-EC"/>
</dbReference>
<dbReference type="GO" id="GO:0036065">
    <property type="term" value="P:fucosylation"/>
    <property type="evidence" value="ECO:0007669"/>
    <property type="project" value="TreeGrafter"/>
</dbReference>
<dbReference type="GO" id="GO:0042354">
    <property type="term" value="P:L-fucose metabolic process"/>
    <property type="evidence" value="ECO:0007669"/>
    <property type="project" value="UniProtKB-UniRule"/>
</dbReference>
<dbReference type="FunFam" id="3.40.1650.10:FF:000001">
    <property type="entry name" value="L-fucose mutarotase"/>
    <property type="match status" value="1"/>
</dbReference>
<dbReference type="Gene3D" id="3.40.1650.10">
    <property type="entry name" value="RbsD-like domain"/>
    <property type="match status" value="1"/>
</dbReference>
<dbReference type="HAMAP" id="MF_01662">
    <property type="entry name" value="L_fucose_rotase"/>
    <property type="match status" value="1"/>
</dbReference>
<dbReference type="InterPro" id="IPR023751">
    <property type="entry name" value="L-fucose_mutarotase"/>
</dbReference>
<dbReference type="InterPro" id="IPR023750">
    <property type="entry name" value="RbsD-like_sf"/>
</dbReference>
<dbReference type="InterPro" id="IPR050443">
    <property type="entry name" value="RbsD/FucU_mutarotase"/>
</dbReference>
<dbReference type="InterPro" id="IPR007721">
    <property type="entry name" value="RbsD_FucU"/>
</dbReference>
<dbReference type="NCBIfam" id="NF011949">
    <property type="entry name" value="PRK15420.1"/>
    <property type="match status" value="1"/>
</dbReference>
<dbReference type="PANTHER" id="PTHR31690">
    <property type="entry name" value="FUCOSE MUTAROTASE"/>
    <property type="match status" value="1"/>
</dbReference>
<dbReference type="PANTHER" id="PTHR31690:SF4">
    <property type="entry name" value="FUCOSE MUTAROTASE"/>
    <property type="match status" value="1"/>
</dbReference>
<dbReference type="Pfam" id="PF05025">
    <property type="entry name" value="RbsD_FucU"/>
    <property type="match status" value="1"/>
</dbReference>
<dbReference type="SUPFAM" id="SSF102546">
    <property type="entry name" value="RbsD-like"/>
    <property type="match status" value="1"/>
</dbReference>
<keyword id="KW-0119">Carbohydrate metabolism</keyword>
<keyword id="KW-0963">Cytoplasm</keyword>
<keyword id="KW-0294">Fucose metabolism</keyword>
<keyword id="KW-0413">Isomerase</keyword>
<keyword id="KW-1185">Reference proteome</keyword>
<feature type="chain" id="PRO_1000187176" description="L-fucose mutarotase">
    <location>
        <begin position="1"/>
        <end position="140"/>
    </location>
</feature>
<feature type="active site" description="Proton donor" evidence="1">
    <location>
        <position position="22"/>
    </location>
</feature>
<feature type="binding site" evidence="1">
    <location>
        <position position="30"/>
    </location>
    <ligand>
        <name>substrate</name>
    </ligand>
</feature>
<feature type="binding site" evidence="1">
    <location>
        <position position="107"/>
    </location>
    <ligand>
        <name>substrate</name>
    </ligand>
</feature>
<feature type="binding site" evidence="1">
    <location>
        <begin position="129"/>
        <end position="131"/>
    </location>
    <ligand>
        <name>substrate</name>
    </ligand>
</feature>
<organism>
    <name type="scientific">Escherichia coli O45:K1 (strain S88 / ExPEC)</name>
    <dbReference type="NCBI Taxonomy" id="585035"/>
    <lineage>
        <taxon>Bacteria</taxon>
        <taxon>Pseudomonadati</taxon>
        <taxon>Pseudomonadota</taxon>
        <taxon>Gammaproteobacteria</taxon>
        <taxon>Enterobacterales</taxon>
        <taxon>Enterobacteriaceae</taxon>
        <taxon>Escherichia</taxon>
    </lineage>
</organism>
<accession>B7MLC5</accession>
<comment type="function">
    <text evidence="1">Involved in the anomeric conversion of L-fucose.</text>
</comment>
<comment type="catalytic activity">
    <reaction evidence="1">
        <text>alpha-L-fucose = beta-L-fucose</text>
        <dbReference type="Rhea" id="RHEA:25580"/>
        <dbReference type="ChEBI" id="CHEBI:42548"/>
        <dbReference type="ChEBI" id="CHEBI:42589"/>
        <dbReference type="EC" id="5.1.3.29"/>
    </reaction>
</comment>
<comment type="pathway">
    <text evidence="1">Carbohydrate metabolism; L-fucose metabolism.</text>
</comment>
<comment type="subunit">
    <text evidence="1">Homodecamer.</text>
</comment>
<comment type="subcellular location">
    <subcellularLocation>
        <location evidence="1">Cytoplasm</location>
    </subcellularLocation>
</comment>
<comment type="similarity">
    <text evidence="1">Belongs to the RbsD / FucU family. FucU mutarotase subfamily.</text>
</comment>
<proteinExistence type="inferred from homology"/>
<reference key="1">
    <citation type="journal article" date="2009" name="PLoS Genet.">
        <title>Organised genome dynamics in the Escherichia coli species results in highly diverse adaptive paths.</title>
        <authorList>
            <person name="Touchon M."/>
            <person name="Hoede C."/>
            <person name="Tenaillon O."/>
            <person name="Barbe V."/>
            <person name="Baeriswyl S."/>
            <person name="Bidet P."/>
            <person name="Bingen E."/>
            <person name="Bonacorsi S."/>
            <person name="Bouchier C."/>
            <person name="Bouvet O."/>
            <person name="Calteau A."/>
            <person name="Chiapello H."/>
            <person name="Clermont O."/>
            <person name="Cruveiller S."/>
            <person name="Danchin A."/>
            <person name="Diard M."/>
            <person name="Dossat C."/>
            <person name="Karoui M.E."/>
            <person name="Frapy E."/>
            <person name="Garry L."/>
            <person name="Ghigo J.M."/>
            <person name="Gilles A.M."/>
            <person name="Johnson J."/>
            <person name="Le Bouguenec C."/>
            <person name="Lescat M."/>
            <person name="Mangenot S."/>
            <person name="Martinez-Jehanne V."/>
            <person name="Matic I."/>
            <person name="Nassif X."/>
            <person name="Oztas S."/>
            <person name="Petit M.A."/>
            <person name="Pichon C."/>
            <person name="Rouy Z."/>
            <person name="Ruf C.S."/>
            <person name="Schneider D."/>
            <person name="Tourret J."/>
            <person name="Vacherie B."/>
            <person name="Vallenet D."/>
            <person name="Medigue C."/>
            <person name="Rocha E.P.C."/>
            <person name="Denamur E."/>
        </authorList>
    </citation>
    <scope>NUCLEOTIDE SEQUENCE [LARGE SCALE GENOMIC DNA]</scope>
    <source>
        <strain>S88 / ExPEC</strain>
    </source>
</reference>
<evidence type="ECO:0000255" key="1">
    <source>
        <dbReference type="HAMAP-Rule" id="MF_01662"/>
    </source>
</evidence>
<protein>
    <recommendedName>
        <fullName evidence="1">L-fucose mutarotase</fullName>
        <ecNumber evidence="1">5.1.3.29</ecNumber>
    </recommendedName>
    <alternativeName>
        <fullName evidence="1">Fucose 1-epimerase</fullName>
    </alternativeName>
    <alternativeName>
        <fullName evidence="1">Type-2 mutarotase</fullName>
    </alternativeName>
</protein>
<sequence>MLKTISPLISPELLKVLAEMGHGDEIIFSDAHFPAHSMGPQVIRADGLLVSDLLQAIIPLFELDSYAPPLVMMAAVEGDTLDPEVERRYRNALSLQAPCPDIIRINRFAFYERAQKAFAIVITGERAKYGNILLKKGVTP</sequence>
<name>FUCM_ECO45</name>
<gene>
    <name evidence="1" type="primary">fucU</name>
    <name type="ordered locus">ECS88_3073</name>
</gene>